<sequence>MSTPSIPQFPSPFSPFSSGSQSTGMAPSQTVGLDTLAEGSQYVLEQLQLSRDAAGTGAGDGATSTSLRNSMSHAKDQPLFDDERNQSAGSGFKNTLQRDPLVEARSAIRKNSSSAPVRRRISRACDQCNQLRTKCDGQHPCAHCIEFGLTCEYARERKKRGKASKKDLAAAAAAATHGSNGHSGQANASLMAERTSEDSRPAQDVNGRYDSTFESHHISSQPSHMQHANNAGISGLHDSQTAPSHSQPSLGTTIDAMHLGHFNTLNDSGRPAMSMSDLRSLPPSVLPPQGLSSGYNASAFALVNPQEPGSPANQFRLGSSAENPTAPFLGLSPPGQSPGWLPLPSPSPANFPSFSLHPFSSTLRYPVLQPVLPHIASIIPQSLACDLLDVYFHSSSPSHLSPSSPYVVGYIFRKQSFLHPTKPRLCSSGLLASMLWVAAQTSEAPFLTSPPSARGRVCQKLLELTIGLLRPLVHGPATGEASPNYAANMVINGVALGGFGVSMDQLGAQSSATGAVDDVATYVHLATVVSASEYKAASMRWWTAAWSLARELKLGRELPPNVSHARQDGERDGDGEADRRHPPTLITSLGHGPGSSGINVTEEEREERRRLWWLLYATDRHLALCYNRPLTLLDKECGGLLQPMNDDLWQVGDFAAAAYRQVGPPVECTGHSMYGYFLPLMTILGGIVDLHHAENHPRFGLAFRNSPEWERQVQDVTRQLDTYGRSLKEFEARYTSNLTLGTAENEPAVEGAHLDHTSPSGRSSSTVGSRVSGSIMHTRMVVAYGTHIMHVLHILLAGKWDPVNLLEDHDLWISSESFVSAMSHAVGAAEAAAEILEHDPDLSFMPFFFGIYLLQGSFLLLLAADKLQGDASPSVVRACETIVRAHEACVVTLNTEYQRTFRKVMRSALAQVRGRIPEDFGEQQQRRREVLALYRWSGDGSGLAL</sequence>
<comment type="function">
    <text evidence="1">Transcriptional activator of the xylanolytic system. Involved in the regulation of extracellular cellulolytic and xylanolytic genes and in the regulation of the intracellular activities of D-xylose catabolic genes in the pentose catabolic pathway (PCP) in response to the presence of D-xylose (By similarity).</text>
</comment>
<comment type="subcellular location">
    <subcellularLocation>
        <location evidence="2">Nucleus</location>
    </subcellularLocation>
</comment>
<comment type="similarity">
    <text evidence="4">Belongs to the xlnR/xlr1 family.</text>
</comment>
<comment type="sequence caution" evidence="4">
    <conflict type="erroneous initiation">
        <sequence resource="EMBL-CDS" id="BAB62022"/>
    </conflict>
</comment>
<proteinExistence type="inferred from homology"/>
<evidence type="ECO:0000250" key="1"/>
<evidence type="ECO:0000255" key="2">
    <source>
        <dbReference type="PROSITE-ProRule" id="PRU00227"/>
    </source>
</evidence>
<evidence type="ECO:0000256" key="3">
    <source>
        <dbReference type="SAM" id="MobiDB-lite"/>
    </source>
</evidence>
<evidence type="ECO:0000305" key="4"/>
<name>XLNR_ASPKA</name>
<protein>
    <recommendedName>
        <fullName>Xylanolytic transcriptional activator xlnR</fullName>
    </recommendedName>
    <alternativeName>
        <fullName>Xylanase regulator</fullName>
    </alternativeName>
</protein>
<organism>
    <name type="scientific">Aspergillus kawachii</name>
    <name type="common">White koji mold</name>
    <name type="synonym">Aspergillus awamori var. kawachi</name>
    <dbReference type="NCBI Taxonomy" id="1069201"/>
    <lineage>
        <taxon>Eukaryota</taxon>
        <taxon>Fungi</taxon>
        <taxon>Dikarya</taxon>
        <taxon>Ascomycota</taxon>
        <taxon>Pezizomycotina</taxon>
        <taxon>Eurotiomycetes</taxon>
        <taxon>Eurotiomycetidae</taxon>
        <taxon>Eurotiales</taxon>
        <taxon>Aspergillaceae</taxon>
        <taxon>Aspergillus</taxon>
        <taxon>Aspergillus subgen. Circumdati</taxon>
    </lineage>
</organism>
<feature type="chain" id="PRO_0000393152" description="Xylanolytic transcriptional activator xlnR">
    <location>
        <begin position="1"/>
        <end position="945"/>
    </location>
</feature>
<feature type="DNA-binding region" description="Zn(2)-C6 fungal-type" evidence="2">
    <location>
        <begin position="125"/>
        <end position="151"/>
    </location>
</feature>
<feature type="region of interest" description="Disordered" evidence="3">
    <location>
        <begin position="1"/>
        <end position="33"/>
    </location>
</feature>
<feature type="region of interest" description="Disordered" evidence="3">
    <location>
        <begin position="53"/>
        <end position="74"/>
    </location>
</feature>
<feature type="region of interest" description="Disordered" evidence="3">
    <location>
        <begin position="172"/>
        <end position="251"/>
    </location>
</feature>
<feature type="region of interest" description="Disordered" evidence="3">
    <location>
        <begin position="559"/>
        <end position="601"/>
    </location>
</feature>
<feature type="compositionally biased region" description="Low complexity" evidence="3">
    <location>
        <begin position="14"/>
        <end position="24"/>
    </location>
</feature>
<feature type="compositionally biased region" description="Polar residues" evidence="3">
    <location>
        <begin position="177"/>
        <end position="188"/>
    </location>
</feature>
<feature type="compositionally biased region" description="Polar residues" evidence="3">
    <location>
        <begin position="218"/>
        <end position="251"/>
    </location>
</feature>
<feature type="compositionally biased region" description="Basic and acidic residues" evidence="3">
    <location>
        <begin position="565"/>
        <end position="581"/>
    </location>
</feature>
<reference key="1">
    <citation type="submission" date="2001-07" db="EMBL/GenBank/DDBJ databases">
        <title>Cloning of XlnR gene from Aspergillus kawachii.</title>
        <authorList>
            <person name="Iwashita K."/>
            <person name="Meijia C.E."/>
            <person name="Ito K."/>
        </authorList>
    </citation>
    <scope>NUCLEOTIDE SEQUENCE [GENOMIC DNA]</scope>
</reference>
<dbReference type="EMBL" id="AB064658">
    <property type="protein sequence ID" value="BAB62022.1"/>
    <property type="status" value="ALT_INIT"/>
    <property type="molecule type" value="Genomic_DNA"/>
</dbReference>
<dbReference type="SMR" id="Q96WP8"/>
<dbReference type="VEuPathDB" id="FungiDB:AKAW_08587"/>
<dbReference type="OrthoDB" id="5365785at2759"/>
<dbReference type="GO" id="GO:0005634">
    <property type="term" value="C:nucleus"/>
    <property type="evidence" value="ECO:0007669"/>
    <property type="project" value="UniProtKB-SubCell"/>
</dbReference>
<dbReference type="GO" id="GO:0003677">
    <property type="term" value="F:DNA binding"/>
    <property type="evidence" value="ECO:0007669"/>
    <property type="project" value="UniProtKB-KW"/>
</dbReference>
<dbReference type="GO" id="GO:0000981">
    <property type="term" value="F:DNA-binding transcription factor activity, RNA polymerase II-specific"/>
    <property type="evidence" value="ECO:0007669"/>
    <property type="project" value="InterPro"/>
</dbReference>
<dbReference type="GO" id="GO:0008270">
    <property type="term" value="F:zinc ion binding"/>
    <property type="evidence" value="ECO:0007669"/>
    <property type="project" value="InterPro"/>
</dbReference>
<dbReference type="GO" id="GO:0006351">
    <property type="term" value="P:DNA-templated transcription"/>
    <property type="evidence" value="ECO:0007669"/>
    <property type="project" value="InterPro"/>
</dbReference>
<dbReference type="GO" id="GO:0045893">
    <property type="term" value="P:positive regulation of DNA-templated transcription"/>
    <property type="evidence" value="ECO:0000250"/>
    <property type="project" value="UniProtKB"/>
</dbReference>
<dbReference type="GO" id="GO:0045493">
    <property type="term" value="P:xylan catabolic process"/>
    <property type="evidence" value="ECO:0000250"/>
    <property type="project" value="UniProtKB"/>
</dbReference>
<dbReference type="CDD" id="cd12148">
    <property type="entry name" value="fungal_TF_MHR"/>
    <property type="match status" value="1"/>
</dbReference>
<dbReference type="CDD" id="cd00067">
    <property type="entry name" value="GAL4"/>
    <property type="match status" value="1"/>
</dbReference>
<dbReference type="FunFam" id="4.10.240.10:FF:000004">
    <property type="entry name" value="Xylanolytic transcriptional activator XlnR"/>
    <property type="match status" value="1"/>
</dbReference>
<dbReference type="Gene3D" id="4.10.240.10">
    <property type="entry name" value="Zn(2)-C6 fungal-type DNA-binding domain"/>
    <property type="match status" value="1"/>
</dbReference>
<dbReference type="InterPro" id="IPR007219">
    <property type="entry name" value="Transcription_factor_dom_fun"/>
</dbReference>
<dbReference type="InterPro" id="IPR051439">
    <property type="entry name" value="XlnR/Xlr1"/>
</dbReference>
<dbReference type="InterPro" id="IPR036864">
    <property type="entry name" value="Zn2-C6_fun-type_DNA-bd_sf"/>
</dbReference>
<dbReference type="InterPro" id="IPR001138">
    <property type="entry name" value="Zn2Cys6_DnaBD"/>
</dbReference>
<dbReference type="PANTHER" id="PTHR47663">
    <property type="entry name" value="XYLANOLYTIC TRANSCRIPTIONAL ACTIVATOR XLNR-RELATED"/>
    <property type="match status" value="1"/>
</dbReference>
<dbReference type="PANTHER" id="PTHR47663:SF1">
    <property type="entry name" value="XYLANOLYTIC TRANSCRIPTIONAL ACTIVATOR XLNR-RELATED"/>
    <property type="match status" value="1"/>
</dbReference>
<dbReference type="Pfam" id="PF04082">
    <property type="entry name" value="Fungal_trans"/>
    <property type="match status" value="1"/>
</dbReference>
<dbReference type="Pfam" id="PF00172">
    <property type="entry name" value="Zn_clus"/>
    <property type="match status" value="1"/>
</dbReference>
<dbReference type="SMART" id="SM00906">
    <property type="entry name" value="Fungal_trans"/>
    <property type="match status" value="1"/>
</dbReference>
<dbReference type="SMART" id="SM00066">
    <property type="entry name" value="GAL4"/>
    <property type="match status" value="1"/>
</dbReference>
<dbReference type="SUPFAM" id="SSF57701">
    <property type="entry name" value="Zn2/Cys6 DNA-binding domain"/>
    <property type="match status" value="1"/>
</dbReference>
<dbReference type="PROSITE" id="PS50048">
    <property type="entry name" value="ZN2_CY6_FUNGAL_2"/>
    <property type="match status" value="1"/>
</dbReference>
<gene>
    <name type="primary">xlnR</name>
</gene>
<accession>Q96WP8</accession>
<keyword id="KW-0010">Activator</keyword>
<keyword id="KW-0238">DNA-binding</keyword>
<keyword id="KW-0479">Metal-binding</keyword>
<keyword id="KW-0539">Nucleus</keyword>
<keyword id="KW-0804">Transcription</keyword>
<keyword id="KW-0805">Transcription regulation</keyword>
<keyword id="KW-0862">Zinc</keyword>